<feature type="signal peptide" evidence="2">
    <location>
        <begin position="1"/>
        <end status="unknown"/>
    </location>
</feature>
<feature type="chain" id="PRO_0000233045" description="Peptidyl-prolyl cis-trans isomerase B">
    <location>
        <begin status="unknown"/>
        <end position="192"/>
    </location>
</feature>
<feature type="domain" description="PPIase cyclophilin-type" evidence="3">
    <location>
        <begin position="23"/>
        <end position="180"/>
    </location>
</feature>
<feature type="short sequence motif" description="Prevents secretion from ER">
    <location>
        <begin position="189"/>
        <end position="192"/>
    </location>
</feature>
<feature type="glycosylation site" description="N-linked (GlcNAc...) asparagine" evidence="2">
    <location>
        <position position="124"/>
    </location>
</feature>
<protein>
    <recommendedName>
        <fullName>Peptidyl-prolyl cis-trans isomerase B</fullName>
        <shortName>PPIase B</shortName>
        <ecNumber>5.2.1.8</ecNumber>
    </recommendedName>
    <alternativeName>
        <fullName>Rotamase B</fullName>
    </alternativeName>
</protein>
<gene>
    <name type="primary">cpr2</name>
    <name type="ORF">AO090023000811</name>
</gene>
<evidence type="ECO:0000250" key="1"/>
<evidence type="ECO:0000255" key="2"/>
<evidence type="ECO:0000255" key="3">
    <source>
        <dbReference type="PROSITE-ProRule" id="PRU00156"/>
    </source>
</evidence>
<evidence type="ECO:0000255" key="4">
    <source>
        <dbReference type="PROSITE-ProRule" id="PRU10138"/>
    </source>
</evidence>
<evidence type="ECO:0000305" key="5"/>
<accession>Q2UGK2</accession>
<name>PPIB_ASPOR</name>
<comment type="function">
    <text evidence="1">PPIases accelerate the folding of proteins. It catalyzes the cis-trans isomerization of proline imidic peptide bonds in oligopeptides (By similarity).</text>
</comment>
<comment type="catalytic activity">
    <reaction>
        <text>[protein]-peptidylproline (omega=180) = [protein]-peptidylproline (omega=0)</text>
        <dbReference type="Rhea" id="RHEA:16237"/>
        <dbReference type="Rhea" id="RHEA-COMP:10747"/>
        <dbReference type="Rhea" id="RHEA-COMP:10748"/>
        <dbReference type="ChEBI" id="CHEBI:83833"/>
        <dbReference type="ChEBI" id="CHEBI:83834"/>
        <dbReference type="EC" id="5.2.1.8"/>
    </reaction>
</comment>
<comment type="activity regulation">
    <text evidence="1">Inhibited by cyclosporin A (CsA).</text>
</comment>
<comment type="subcellular location">
    <subcellularLocation>
        <location evidence="4">Endoplasmic reticulum lumen</location>
    </subcellularLocation>
</comment>
<comment type="similarity">
    <text evidence="5">Belongs to the cyclophilin-type PPIase family. PPIase B subfamily.</text>
</comment>
<dbReference type="EC" id="5.2.1.8"/>
<dbReference type="EMBL" id="BA000051">
    <property type="protein sequence ID" value="BAE59313.1"/>
    <property type="molecule type" value="Genomic_DNA"/>
</dbReference>
<dbReference type="SMR" id="Q2UGK2"/>
<dbReference type="STRING" id="510516.Q2UGK2"/>
<dbReference type="GlyCosmos" id="Q2UGK2">
    <property type="glycosylation" value="1 site, No reported glycans"/>
</dbReference>
<dbReference type="EnsemblFungi" id="BAE59313">
    <property type="protein sequence ID" value="BAE59313"/>
    <property type="gene ID" value="AO090023000811"/>
</dbReference>
<dbReference type="HOGENOM" id="CLU_012062_4_3_1"/>
<dbReference type="Proteomes" id="UP000006564">
    <property type="component" value="Chromosome 3"/>
</dbReference>
<dbReference type="GO" id="GO:0005788">
    <property type="term" value="C:endoplasmic reticulum lumen"/>
    <property type="evidence" value="ECO:0007669"/>
    <property type="project" value="UniProtKB-SubCell"/>
</dbReference>
<dbReference type="GO" id="GO:0000324">
    <property type="term" value="C:fungal-type vacuole"/>
    <property type="evidence" value="ECO:0007669"/>
    <property type="project" value="TreeGrafter"/>
</dbReference>
<dbReference type="GO" id="GO:0016018">
    <property type="term" value="F:cyclosporin A binding"/>
    <property type="evidence" value="ECO:0007669"/>
    <property type="project" value="TreeGrafter"/>
</dbReference>
<dbReference type="GO" id="GO:0003755">
    <property type="term" value="F:peptidyl-prolyl cis-trans isomerase activity"/>
    <property type="evidence" value="ECO:0007669"/>
    <property type="project" value="UniProtKB-KW"/>
</dbReference>
<dbReference type="GO" id="GO:0006457">
    <property type="term" value="P:protein folding"/>
    <property type="evidence" value="ECO:0007669"/>
    <property type="project" value="InterPro"/>
</dbReference>
<dbReference type="CDD" id="cd01926">
    <property type="entry name" value="cyclophilin_ABH_like"/>
    <property type="match status" value="1"/>
</dbReference>
<dbReference type="FunFam" id="2.40.100.10:FF:000001">
    <property type="entry name" value="Peptidyl-prolyl cis-trans isomerase"/>
    <property type="match status" value="1"/>
</dbReference>
<dbReference type="Gene3D" id="2.40.100.10">
    <property type="entry name" value="Cyclophilin-like"/>
    <property type="match status" value="1"/>
</dbReference>
<dbReference type="InterPro" id="IPR029000">
    <property type="entry name" value="Cyclophilin-like_dom_sf"/>
</dbReference>
<dbReference type="InterPro" id="IPR024936">
    <property type="entry name" value="Cyclophilin-type_PPIase"/>
</dbReference>
<dbReference type="InterPro" id="IPR020892">
    <property type="entry name" value="Cyclophilin-type_PPIase_CS"/>
</dbReference>
<dbReference type="InterPro" id="IPR002130">
    <property type="entry name" value="Cyclophilin-type_PPIase_dom"/>
</dbReference>
<dbReference type="PANTHER" id="PTHR11071">
    <property type="entry name" value="PEPTIDYL-PROLYL CIS-TRANS ISOMERASE"/>
    <property type="match status" value="1"/>
</dbReference>
<dbReference type="PANTHER" id="PTHR11071:SF561">
    <property type="entry name" value="PEPTIDYL-PROLYL CIS-TRANS ISOMERASE D-RELATED"/>
    <property type="match status" value="1"/>
</dbReference>
<dbReference type="Pfam" id="PF00160">
    <property type="entry name" value="Pro_isomerase"/>
    <property type="match status" value="1"/>
</dbReference>
<dbReference type="PIRSF" id="PIRSF001467">
    <property type="entry name" value="Peptidylpro_ismrse"/>
    <property type="match status" value="1"/>
</dbReference>
<dbReference type="PRINTS" id="PR00153">
    <property type="entry name" value="CSAPPISMRASE"/>
</dbReference>
<dbReference type="SUPFAM" id="SSF50891">
    <property type="entry name" value="Cyclophilin-like"/>
    <property type="match status" value="1"/>
</dbReference>
<dbReference type="PROSITE" id="PS00170">
    <property type="entry name" value="CSA_PPIASE_1"/>
    <property type="match status" value="1"/>
</dbReference>
<dbReference type="PROSITE" id="PS50072">
    <property type="entry name" value="CSA_PPIASE_2"/>
    <property type="match status" value="1"/>
</dbReference>
<dbReference type="PROSITE" id="PS00014">
    <property type="entry name" value="ER_TARGET"/>
    <property type="match status" value="1"/>
</dbReference>
<reference key="1">
    <citation type="journal article" date="2005" name="Nature">
        <title>Genome sequencing and analysis of Aspergillus oryzae.</title>
        <authorList>
            <person name="Machida M."/>
            <person name="Asai K."/>
            <person name="Sano M."/>
            <person name="Tanaka T."/>
            <person name="Kumagai T."/>
            <person name="Terai G."/>
            <person name="Kusumoto K."/>
            <person name="Arima T."/>
            <person name="Akita O."/>
            <person name="Kashiwagi Y."/>
            <person name="Abe K."/>
            <person name="Gomi K."/>
            <person name="Horiuchi H."/>
            <person name="Kitamoto K."/>
            <person name="Kobayashi T."/>
            <person name="Takeuchi M."/>
            <person name="Denning D.W."/>
            <person name="Galagan J.E."/>
            <person name="Nierman W.C."/>
            <person name="Yu J."/>
            <person name="Archer D.B."/>
            <person name="Bennett J.W."/>
            <person name="Bhatnagar D."/>
            <person name="Cleveland T.E."/>
            <person name="Fedorova N.D."/>
            <person name="Gotoh O."/>
            <person name="Horikawa H."/>
            <person name="Hosoyama A."/>
            <person name="Ichinomiya M."/>
            <person name="Igarashi R."/>
            <person name="Iwashita K."/>
            <person name="Juvvadi P.R."/>
            <person name="Kato M."/>
            <person name="Kato Y."/>
            <person name="Kin T."/>
            <person name="Kokubun A."/>
            <person name="Maeda H."/>
            <person name="Maeyama N."/>
            <person name="Maruyama J."/>
            <person name="Nagasaki H."/>
            <person name="Nakajima T."/>
            <person name="Oda K."/>
            <person name="Okada K."/>
            <person name="Paulsen I."/>
            <person name="Sakamoto K."/>
            <person name="Sawano T."/>
            <person name="Takahashi M."/>
            <person name="Takase K."/>
            <person name="Terabayashi Y."/>
            <person name="Wortman J.R."/>
            <person name="Yamada O."/>
            <person name="Yamagata Y."/>
            <person name="Anazawa H."/>
            <person name="Hata Y."/>
            <person name="Koide Y."/>
            <person name="Komori T."/>
            <person name="Koyama Y."/>
            <person name="Minetoki T."/>
            <person name="Suharnan S."/>
            <person name="Tanaka A."/>
            <person name="Isono K."/>
            <person name="Kuhara S."/>
            <person name="Ogasawara N."/>
            <person name="Kikuchi H."/>
        </authorList>
    </citation>
    <scope>NUCLEOTIDE SEQUENCE [LARGE SCALE GENOMIC DNA]</scope>
    <source>
        <strain>ATCC 42149 / RIB 40</strain>
    </source>
</reference>
<keyword id="KW-0256">Endoplasmic reticulum</keyword>
<keyword id="KW-0325">Glycoprotein</keyword>
<keyword id="KW-0413">Isomerase</keyword>
<keyword id="KW-1185">Reference proteome</keyword>
<keyword id="KW-0697">Rotamase</keyword>
<keyword id="KW-0732">Signal</keyword>
<proteinExistence type="inferred from homology"/>
<sequence length="192" mass="21081">MTDLRSAEEITSQQYSSGLATVYFDIEHGNKPLGRVVLGLYGKTVPKTAENFRALATGEKGFGYEGSTFHRVIKEFMIQGGDFTRGDGTGGKSIYGEKFKDENFKIRHTKKGLLSMANAGKDTNGSQFFITTVATPWLDGRHVVFGEVLEGYEVVEAIENVPKVPGDKPQQVVKIVKSGELESEDKGSHEEL</sequence>
<organism>
    <name type="scientific">Aspergillus oryzae (strain ATCC 42149 / RIB 40)</name>
    <name type="common">Yellow koji mold</name>
    <dbReference type="NCBI Taxonomy" id="510516"/>
    <lineage>
        <taxon>Eukaryota</taxon>
        <taxon>Fungi</taxon>
        <taxon>Dikarya</taxon>
        <taxon>Ascomycota</taxon>
        <taxon>Pezizomycotina</taxon>
        <taxon>Eurotiomycetes</taxon>
        <taxon>Eurotiomycetidae</taxon>
        <taxon>Eurotiales</taxon>
        <taxon>Aspergillaceae</taxon>
        <taxon>Aspergillus</taxon>
        <taxon>Aspergillus subgen. Circumdati</taxon>
    </lineage>
</organism>